<name>PT1L_HUMLU</name>
<keyword id="KW-0150">Chloroplast</keyword>
<keyword id="KW-0472">Membrane</keyword>
<keyword id="KW-0934">Plastid</keyword>
<keyword id="KW-0808">Transferase</keyword>
<keyword id="KW-0809">Transit peptide</keyword>
<keyword id="KW-0812">Transmembrane</keyword>
<keyword id="KW-1133">Transmembrane helix</keyword>
<protein>
    <recommendedName>
        <fullName evidence="6">2-acylphloroglucinol 4-prenyltransferase</fullName>
        <ecNumber evidence="3 4">2.5.1.136</ecNumber>
    </recommendedName>
    <alternativeName>
        <fullName evidence="5">Aromatic prenyltransferase PT1L</fullName>
    </alternativeName>
    <alternativeName>
        <fullName evidence="5">Humulus lupulus prenyltransferase-1-like</fullName>
        <shortName evidence="5">HlPT1L</shortName>
    </alternativeName>
</protein>
<sequence>MELSSVSSFSLGTNPFISIPHNNNNNLKVSSYCCKSKSRVINSTNSKHCSPNNNNNNNTSNKTTHLLGLYGQSRCLLKPLSIFSCKDQRGNSIRASAQIEDRPPESGNLSALTNVKDFVSVCWEYVRPYTAKGVIICSSCLFGRELLENPNLFSWPLIFRALLGMLAILGSCFYTAGINQIFDMDIDRINKPDLPLVSGRISVESAWLLTLSPAIIGFILILKLNSGPLLTSLYCLAILSGTIYSVPPFRWKKNPITAFLCILMIHAGLNFSVYYASRAALGLAFVWSPSFSFITAFITFMTLTLASSKDLSDINGDRKFGVETFATKLGAKNITLLGTGLLLLNYVAAISTAIIWPKAFKSNIMLLSHAILAFSLFFQARELDRTNYTPEACKSFYEFIWILFSAEYVVYLFI</sequence>
<gene>
    <name evidence="5" type="primary">PT1L</name>
</gene>
<dbReference type="EC" id="2.5.1.136" evidence="3 4"/>
<dbReference type="EMBL" id="KM222441">
    <property type="protein sequence ID" value="AJD80254.1"/>
    <property type="molecule type" value="mRNA"/>
</dbReference>
<dbReference type="KEGG" id="ag:AJD80254"/>
<dbReference type="BioCyc" id="MetaCyc:MONOMER-12001"/>
<dbReference type="BRENDA" id="2.5.1.136">
    <property type="organism ID" value="2716"/>
</dbReference>
<dbReference type="SABIO-RK" id="A0A0B5A051"/>
<dbReference type="GO" id="GO:0031969">
    <property type="term" value="C:chloroplast membrane"/>
    <property type="evidence" value="ECO:0007669"/>
    <property type="project" value="UniProtKB-SubCell"/>
</dbReference>
<dbReference type="GO" id="GO:0004659">
    <property type="term" value="F:prenyltransferase activity"/>
    <property type="evidence" value="ECO:0007669"/>
    <property type="project" value="InterPro"/>
</dbReference>
<dbReference type="CDD" id="cd13960">
    <property type="entry name" value="PT_UbiA_HPT1"/>
    <property type="match status" value="1"/>
</dbReference>
<dbReference type="Gene3D" id="1.10.357.140">
    <property type="entry name" value="UbiA prenyltransferase"/>
    <property type="match status" value="1"/>
</dbReference>
<dbReference type="InterPro" id="IPR044502">
    <property type="entry name" value="AtHST-like"/>
</dbReference>
<dbReference type="InterPro" id="IPR000537">
    <property type="entry name" value="UbiA_prenyltransferase"/>
</dbReference>
<dbReference type="InterPro" id="IPR044878">
    <property type="entry name" value="UbiA_sf"/>
</dbReference>
<dbReference type="PANTHER" id="PTHR43009">
    <property type="entry name" value="HOMOGENTISATE SOLANESYLTRANSFERASE, CHLOROPLASTIC"/>
    <property type="match status" value="1"/>
</dbReference>
<dbReference type="PANTHER" id="PTHR43009:SF10">
    <property type="entry name" value="HOMOGENTISATE SOLANESYLTRANSFERASE, CHLOROPLASTIC"/>
    <property type="match status" value="1"/>
</dbReference>
<dbReference type="Pfam" id="PF01040">
    <property type="entry name" value="UbiA"/>
    <property type="match status" value="1"/>
</dbReference>
<feature type="transit peptide" description="Chloroplast" evidence="2">
    <location>
        <begin position="1"/>
        <end position="86"/>
    </location>
</feature>
<feature type="chain" id="PRO_0000439227" description="2-acylphloroglucinol 4-prenyltransferase" evidence="2">
    <location>
        <begin position="87"/>
        <end position="414"/>
    </location>
</feature>
<feature type="transmembrane region" description="Helical" evidence="2">
    <location>
        <begin position="153"/>
        <end position="173"/>
    </location>
</feature>
<feature type="transmembrane region" description="Helical" evidence="2">
    <location>
        <begin position="201"/>
        <end position="221"/>
    </location>
</feature>
<feature type="transmembrane region" description="Helical" evidence="2">
    <location>
        <begin position="229"/>
        <end position="249"/>
    </location>
</feature>
<feature type="transmembrane region" description="Helical" evidence="2">
    <location>
        <begin position="256"/>
        <end position="276"/>
    </location>
</feature>
<feature type="transmembrane region" description="Helical" evidence="2">
    <location>
        <begin position="281"/>
        <end position="301"/>
    </location>
</feature>
<feature type="transmembrane region" description="Helical" evidence="2">
    <location>
        <begin position="336"/>
        <end position="356"/>
    </location>
</feature>
<feature type="transmembrane region" description="Helical" evidence="2">
    <location>
        <begin position="359"/>
        <end position="379"/>
    </location>
</feature>
<feature type="transmembrane region" description="Helical" evidence="2">
    <location>
        <begin position="394"/>
        <end position="414"/>
    </location>
</feature>
<feature type="mutagenesis site" description="Loss of catalytic activity; when associated with A-187." evidence="3">
    <original>D</original>
    <variation>A</variation>
    <location>
        <position position="183"/>
    </location>
</feature>
<feature type="mutagenesis site" description="Loss of catalytic activity; when associated with A-183." evidence="3">
    <original>D</original>
    <variation>A</variation>
    <location>
        <position position="187"/>
    </location>
</feature>
<feature type="mutagenesis site" description="Loss of catalytic activity; when associated with A-313." evidence="3">
    <original>D</original>
    <variation>A</variation>
    <location>
        <position position="310"/>
    </location>
</feature>
<feature type="mutagenesis site" description="Loss of catalytic activity; when associated with A-310." evidence="3">
    <original>D</original>
    <variation>A</variation>
    <location>
        <position position="313"/>
    </location>
</feature>
<organism>
    <name type="scientific">Humulus lupulus</name>
    <name type="common">European hop</name>
    <dbReference type="NCBI Taxonomy" id="3486"/>
    <lineage>
        <taxon>Eukaryota</taxon>
        <taxon>Viridiplantae</taxon>
        <taxon>Streptophyta</taxon>
        <taxon>Embryophyta</taxon>
        <taxon>Tracheophyta</taxon>
        <taxon>Spermatophyta</taxon>
        <taxon>Magnoliopsida</taxon>
        <taxon>eudicotyledons</taxon>
        <taxon>Gunneridae</taxon>
        <taxon>Pentapetalae</taxon>
        <taxon>rosids</taxon>
        <taxon>fabids</taxon>
        <taxon>Rosales</taxon>
        <taxon>Cannabaceae</taxon>
        <taxon>Humulus</taxon>
    </lineage>
</organism>
<proteinExistence type="evidence at protein level"/>
<reference key="1">
    <citation type="journal article" date="2015" name="Plant Physiol.">
        <title>A heteromeric membrane-bound prenyltransferase complex from hop catalyzes three sequential aromatic prenylations in the bitter Acid pathway.</title>
        <authorList>
            <person name="Li H."/>
            <person name="Ban Z."/>
            <person name="Qin H."/>
            <person name="Ma L."/>
            <person name="King A.J."/>
            <person name="Wang G."/>
        </authorList>
    </citation>
    <scope>NUCLEOTIDE SEQUENCE [MRNA]</scope>
    <scope>FUNCTION</scope>
    <scope>CATALYTIC ACTIVITY</scope>
    <scope>INTERACTION WITH PT2</scope>
    <scope>SUBCELLULAR LOCATION</scope>
    <scope>TISSUE SPECIFICITY</scope>
    <scope>MUTAGENESIS OF ASP-183; ASP-187; ASP-310 AND ASP-313</scope>
    <scope>BIOPHYSICOCHEMICAL PROPERTIES</scope>
    <scope>PATHWAY</scope>
    <source>
        <strain>cv. Nugget</strain>
        <tissue>Lupulin gland</tissue>
    </source>
</reference>
<reference key="2">
    <citation type="journal article" date="2018" name="Proc. Natl. Acad. Sci. U.S.A.">
        <title>Noncatalytic chalcone isomerase-fold proteins in Humulus lupulus are auxiliary components in prenylated flavonoid biosynthesis.</title>
        <authorList>
            <person name="Ban Z."/>
            <person name="Qin H."/>
            <person name="Mitchell A.J."/>
            <person name="Liu B."/>
            <person name="Zhang F."/>
            <person name="Weng J.-K."/>
            <person name="Dixon R.A."/>
            <person name="Wang G."/>
        </authorList>
    </citation>
    <scope>BIOPHYSICOCHEMICAL PROPERTIES</scope>
    <scope>CATALYTIC ACTIVITY</scope>
    <scope>INTERACTION WITH CHIL2</scope>
    <scope>ACTIVITY REGULATION</scope>
</reference>
<reference key="3">
    <citation type="journal article" date="2019" name="Nat. Prod. Rep.">
        <title>Non-volatile natural products in plant glandular trichomes: chemistry, biological activities and biosynthesis.</title>
        <authorList>
            <person name="Liu Y."/>
            <person name="Jing S.-X."/>
            <person name="Luo S.-H."/>
            <person name="Li S.-H."/>
        </authorList>
    </citation>
    <scope>PATHWAY</scope>
    <scope>REVIEW</scope>
</reference>
<comment type="function">
    <text evidence="3 7">Involved in the biosynthesis of prenylated phenolics natural products which contribute to the bitter taste of beer and display broad biological activities (Probable). Catalyzes the first prenylation step in the beta-bitter acid pathway (PubMed:25564559). Uses dimethylallyl diphosphate (DMAPP) as the prenyl donor (PubMed:25564559).</text>
</comment>
<comment type="catalytic activity">
    <molecule>2-acylphloroglucinol 4-prenyltransferase</molecule>
    <reaction evidence="4">
        <text>2',4,4',6'-tetrahydroxychalcone + dimethylallyl diphosphate = desmethylxanthohumol + diphosphate</text>
        <dbReference type="Rhea" id="RHEA:51876"/>
        <dbReference type="ChEBI" id="CHEBI:15413"/>
        <dbReference type="ChEBI" id="CHEBI:33019"/>
        <dbReference type="ChEBI" id="CHEBI:57623"/>
        <dbReference type="ChEBI" id="CHEBI:80489"/>
        <dbReference type="EC" id="2.5.1.136"/>
    </reaction>
</comment>
<comment type="catalytic activity">
    <reaction evidence="3">
        <text>a 2-acylphloroglucinol + dimethylallyl diphosphate = a 2-acyl-4-prenylphloroglucinol + diphosphate</text>
        <dbReference type="Rhea" id="RHEA:51752"/>
        <dbReference type="ChEBI" id="CHEBI:33019"/>
        <dbReference type="ChEBI" id="CHEBI:57623"/>
        <dbReference type="ChEBI" id="CHEBI:134371"/>
        <dbReference type="ChEBI" id="CHEBI:134386"/>
        <dbReference type="EC" id="2.5.1.136"/>
    </reaction>
</comment>
<comment type="cofactor">
    <cofactor evidence="1">
        <name>Mg(2+)</name>
        <dbReference type="ChEBI" id="CHEBI:18420"/>
    </cofactor>
</comment>
<comment type="activity regulation">
    <text evidence="4">Stimulated by CHIL2 but inhibited by CHIL1.</text>
</comment>
<comment type="biophysicochemical properties">
    <kinetics>
        <KM evidence="4">5.74 uM for naringenin chalcone</KM>
        <KM evidence="4">75.12 uM for dimethylallyl diphosphate</KM>
        <KM evidence="4">5.01 uM for naringenin chalcone (in the presence of CHIL2)</KM>
        <KM evidence="4">62.78 uM for dimethylallyl diphosphate (in the presence of CHIL2)</KM>
        <KM evidence="3">1.36 uM for phlorisovalerophenone</KM>
        <KM evidence="3">5.1 uM for phlorisobutyrophenone</KM>
        <KM evidence="3">43.52 uM for dimethylallyl diphosphate</KM>
        <KM evidence="3">5.7 uM for geranyl diphosphate</KM>
        <Vmax evidence="4">0.1 umol/min/g enzyme with naringenin chalcone as substrate</Vmax>
        <Vmax evidence="4">0.13 umol/min/g enzyme with dimethylallyl diphosphate as substrate</Vmax>
        <Vmax evidence="4">0.12 umol/min/g enzyme with naringenin chalcone as substrate (in the presence of CHIL2)</Vmax>
        <Vmax evidence="4">0.23 umol/min/g enzyme with dimethylallyl diphosphate as substrate (in the presence of CHIL2)</Vmax>
    </kinetics>
</comment>
<comment type="pathway">
    <text evidence="7">Secondary metabolite biosynthesis.</text>
</comment>
<comment type="subunit">
    <text evidence="3 4">Component an active demethylxanthohumol (DMX) biosynthetic metabolon in glandular trichomes (lupulin glands) that encompasses a chalcone synthase (CHS) and a membrane-bound prenyltransferase (PubMed:29760092). Interacts with PT2, forming a functional metabolon (PubMed:25564559). Interacts with CHIL2; this interaction promotes catalytic activity (PubMed:29760092).</text>
</comment>
<comment type="subcellular location">
    <subcellularLocation>
        <location evidence="3">Plastid</location>
    </subcellularLocation>
    <subcellularLocation>
        <location evidence="2">Plastid</location>
        <location evidence="2">Chloroplast membrane</location>
        <topology evidence="2">Multi-pass membrane protein</topology>
    </subcellularLocation>
</comment>
<comment type="tissue specificity">
    <text evidence="3">Expressed in trichomes.</text>
</comment>
<comment type="similarity">
    <text evidence="6">Belongs to the UbiA prenyltransferase family.</text>
</comment>
<accession>A0A0B5A051</accession>
<evidence type="ECO:0000250" key="1">
    <source>
        <dbReference type="UniProtKB" id="E5RP65"/>
    </source>
</evidence>
<evidence type="ECO:0000255" key="2"/>
<evidence type="ECO:0000269" key="3">
    <source>
    </source>
</evidence>
<evidence type="ECO:0000269" key="4">
    <source>
    </source>
</evidence>
<evidence type="ECO:0000303" key="5">
    <source>
    </source>
</evidence>
<evidence type="ECO:0000305" key="6"/>
<evidence type="ECO:0000305" key="7">
    <source>
    </source>
</evidence>